<gene>
    <name evidence="1" type="primary">mutL</name>
    <name type="ordered locus">RAF_ORF1247</name>
</gene>
<keyword id="KW-0227">DNA damage</keyword>
<keyword id="KW-0234">DNA repair</keyword>
<name>MUTL_RICAE</name>
<protein>
    <recommendedName>
        <fullName evidence="1">DNA mismatch repair protein MutL</fullName>
    </recommendedName>
</protein>
<reference key="1">
    <citation type="journal article" date="2009" name="BMC Genomics">
        <title>Analysis of the Rickettsia africae genome reveals that virulence acquisition in Rickettsia species may be explained by genome reduction.</title>
        <authorList>
            <person name="Fournier P.-E."/>
            <person name="El Karkouri K."/>
            <person name="Leroy Q."/>
            <person name="Robert C."/>
            <person name="Giumelli B."/>
            <person name="Renesto P."/>
            <person name="Socolovschi C."/>
            <person name="Parola P."/>
            <person name="Audic S."/>
            <person name="Raoult D."/>
        </authorList>
    </citation>
    <scope>NUCLEOTIDE SEQUENCE [LARGE SCALE GENOMIC DNA]</scope>
    <source>
        <strain>ESF-5</strain>
    </source>
</reference>
<proteinExistence type="inferred from homology"/>
<comment type="function">
    <text evidence="1">This protein is involved in the repair of mismatches in DNA. It is required for dam-dependent methyl-directed DNA mismatch repair. May act as a 'molecular matchmaker', a protein that promotes the formation of a stable complex between two or more DNA-binding proteins in an ATP-dependent manner without itself being part of a final effector complex.</text>
</comment>
<comment type="similarity">
    <text evidence="1">Belongs to the DNA mismatch repair MutL/HexB family.</text>
</comment>
<feature type="chain" id="PRO_1000203396" description="DNA mismatch repair protein MutL">
    <location>
        <begin position="1"/>
        <end position="610"/>
    </location>
</feature>
<sequence>MTIKFLSESTINRIAAGEVIERPASVVKELVENAVDASSTKIDIVLERAGKNLIIISDDGIGMTDKELEIAVERHTTSKFDESDFLNINTFGFRGEALPSIAAISKMLITSKKRDADKAFQIKLIGGNEKQVTISVHNEGTKIEIRDLFFATPARLKFLRADKTELAATVDVVKKIALAHPKISFSLTHDGKNLLKLKGQNKDAETNLKQRIIDVIGDDFIKNAAYIDFKTPDFSICGYTSSPTYNRASSEDQFLFINNRSVKDKLLQVALRVAYQDYLARDRYPICAIFLQIDPQLVDVNVHPAKAEVRFHDPNYVRNLLIEAIKNALTNKSHVTSTTIASDALELFKNPLVNKQSPVSKVINVNSKSADYRPTTHSTLNTVPQNHVCQKLIDTLSHAKIEQEVENRIEHEQQTRKQYKLGAAKAQLHTTYIISQTEDSIVITDQHAAHERLGYEKIKDYLKTEELIKQRLLIPEIVELLNEKKADCLYDHREKLYKLGLTLEKFGEKSIIVTEIPNILGDVNVQKLIQDLADHLSDFGKNIALTELIEHVTETYACHYSIRAGRKLSADEMNALLRQMENTPLSGQCNHGRPTYIELKLKDIERLFGR</sequence>
<organism>
    <name type="scientific">Rickettsia africae (strain ESF-5)</name>
    <dbReference type="NCBI Taxonomy" id="347255"/>
    <lineage>
        <taxon>Bacteria</taxon>
        <taxon>Pseudomonadati</taxon>
        <taxon>Pseudomonadota</taxon>
        <taxon>Alphaproteobacteria</taxon>
        <taxon>Rickettsiales</taxon>
        <taxon>Rickettsiaceae</taxon>
        <taxon>Rickettsieae</taxon>
        <taxon>Rickettsia</taxon>
        <taxon>spotted fever group</taxon>
    </lineage>
</organism>
<evidence type="ECO:0000255" key="1">
    <source>
        <dbReference type="HAMAP-Rule" id="MF_00149"/>
    </source>
</evidence>
<accession>C3PM22</accession>
<dbReference type="EMBL" id="CP001612">
    <property type="protein sequence ID" value="ACP54012.1"/>
    <property type="molecule type" value="Genomic_DNA"/>
</dbReference>
<dbReference type="RefSeq" id="WP_012720119.1">
    <property type="nucleotide sequence ID" value="NC_012633.1"/>
</dbReference>
<dbReference type="SMR" id="C3PM22"/>
<dbReference type="KEGG" id="raf:RAF_ORF1247"/>
<dbReference type="HOGENOM" id="CLU_004131_4_2_5"/>
<dbReference type="Proteomes" id="UP000002305">
    <property type="component" value="Chromosome"/>
</dbReference>
<dbReference type="GO" id="GO:0032300">
    <property type="term" value="C:mismatch repair complex"/>
    <property type="evidence" value="ECO:0007669"/>
    <property type="project" value="InterPro"/>
</dbReference>
<dbReference type="GO" id="GO:0005524">
    <property type="term" value="F:ATP binding"/>
    <property type="evidence" value="ECO:0007669"/>
    <property type="project" value="InterPro"/>
</dbReference>
<dbReference type="GO" id="GO:0016887">
    <property type="term" value="F:ATP hydrolysis activity"/>
    <property type="evidence" value="ECO:0007669"/>
    <property type="project" value="InterPro"/>
</dbReference>
<dbReference type="GO" id="GO:0140664">
    <property type="term" value="F:ATP-dependent DNA damage sensor activity"/>
    <property type="evidence" value="ECO:0007669"/>
    <property type="project" value="InterPro"/>
</dbReference>
<dbReference type="GO" id="GO:0030983">
    <property type="term" value="F:mismatched DNA binding"/>
    <property type="evidence" value="ECO:0007669"/>
    <property type="project" value="InterPro"/>
</dbReference>
<dbReference type="GO" id="GO:0006298">
    <property type="term" value="P:mismatch repair"/>
    <property type="evidence" value="ECO:0007669"/>
    <property type="project" value="UniProtKB-UniRule"/>
</dbReference>
<dbReference type="CDD" id="cd16926">
    <property type="entry name" value="HATPase_MutL-MLH-PMS-like"/>
    <property type="match status" value="1"/>
</dbReference>
<dbReference type="CDD" id="cd00782">
    <property type="entry name" value="MutL_Trans"/>
    <property type="match status" value="1"/>
</dbReference>
<dbReference type="FunFam" id="3.30.565.10:FF:000003">
    <property type="entry name" value="DNA mismatch repair endonuclease MutL"/>
    <property type="match status" value="1"/>
</dbReference>
<dbReference type="Gene3D" id="3.30.230.10">
    <property type="match status" value="1"/>
</dbReference>
<dbReference type="Gene3D" id="3.30.565.10">
    <property type="entry name" value="Histidine kinase-like ATPase, C-terminal domain"/>
    <property type="match status" value="1"/>
</dbReference>
<dbReference type="Gene3D" id="3.30.1540.20">
    <property type="entry name" value="MutL, C-terminal domain, dimerisation subdomain"/>
    <property type="match status" value="1"/>
</dbReference>
<dbReference type="Gene3D" id="3.30.1370.100">
    <property type="entry name" value="MutL, C-terminal domain, regulatory subdomain"/>
    <property type="match status" value="1"/>
</dbReference>
<dbReference type="HAMAP" id="MF_00149">
    <property type="entry name" value="DNA_mis_repair"/>
    <property type="match status" value="1"/>
</dbReference>
<dbReference type="InterPro" id="IPR014762">
    <property type="entry name" value="DNA_mismatch_repair_CS"/>
</dbReference>
<dbReference type="InterPro" id="IPR020667">
    <property type="entry name" value="DNA_mismatch_repair_MutL"/>
</dbReference>
<dbReference type="InterPro" id="IPR013507">
    <property type="entry name" value="DNA_mismatch_S5_2-like"/>
</dbReference>
<dbReference type="InterPro" id="IPR036890">
    <property type="entry name" value="HATPase_C_sf"/>
</dbReference>
<dbReference type="InterPro" id="IPR002099">
    <property type="entry name" value="MutL/Mlh/PMS"/>
</dbReference>
<dbReference type="InterPro" id="IPR038973">
    <property type="entry name" value="MutL/Mlh/Pms-like"/>
</dbReference>
<dbReference type="InterPro" id="IPR014790">
    <property type="entry name" value="MutL_C"/>
</dbReference>
<dbReference type="InterPro" id="IPR042120">
    <property type="entry name" value="MutL_C_dimsub"/>
</dbReference>
<dbReference type="InterPro" id="IPR042121">
    <property type="entry name" value="MutL_C_regsub"/>
</dbReference>
<dbReference type="InterPro" id="IPR037198">
    <property type="entry name" value="MutL_C_sf"/>
</dbReference>
<dbReference type="InterPro" id="IPR020568">
    <property type="entry name" value="Ribosomal_Su5_D2-typ_SF"/>
</dbReference>
<dbReference type="InterPro" id="IPR014721">
    <property type="entry name" value="Ribsml_uS5_D2-typ_fold_subgr"/>
</dbReference>
<dbReference type="NCBIfam" id="TIGR00585">
    <property type="entry name" value="mutl"/>
    <property type="match status" value="1"/>
</dbReference>
<dbReference type="NCBIfam" id="NF000952">
    <property type="entry name" value="PRK00095.2-2"/>
    <property type="match status" value="1"/>
</dbReference>
<dbReference type="NCBIfam" id="NF000953">
    <property type="entry name" value="PRK00095.2-4"/>
    <property type="match status" value="1"/>
</dbReference>
<dbReference type="PANTHER" id="PTHR10073">
    <property type="entry name" value="DNA MISMATCH REPAIR PROTEIN MLH, PMS, MUTL"/>
    <property type="match status" value="1"/>
</dbReference>
<dbReference type="PANTHER" id="PTHR10073:SF12">
    <property type="entry name" value="DNA MISMATCH REPAIR PROTEIN MLH1"/>
    <property type="match status" value="1"/>
</dbReference>
<dbReference type="Pfam" id="PF01119">
    <property type="entry name" value="DNA_mis_repair"/>
    <property type="match status" value="1"/>
</dbReference>
<dbReference type="Pfam" id="PF13589">
    <property type="entry name" value="HATPase_c_3"/>
    <property type="match status" value="1"/>
</dbReference>
<dbReference type="Pfam" id="PF08676">
    <property type="entry name" value="MutL_C"/>
    <property type="match status" value="1"/>
</dbReference>
<dbReference type="SMART" id="SM01340">
    <property type="entry name" value="DNA_mis_repair"/>
    <property type="match status" value="1"/>
</dbReference>
<dbReference type="SMART" id="SM00853">
    <property type="entry name" value="MutL_C"/>
    <property type="match status" value="1"/>
</dbReference>
<dbReference type="SUPFAM" id="SSF55874">
    <property type="entry name" value="ATPase domain of HSP90 chaperone/DNA topoisomerase II/histidine kinase"/>
    <property type="match status" value="1"/>
</dbReference>
<dbReference type="SUPFAM" id="SSF118116">
    <property type="entry name" value="DNA mismatch repair protein MutL"/>
    <property type="match status" value="1"/>
</dbReference>
<dbReference type="SUPFAM" id="SSF54211">
    <property type="entry name" value="Ribosomal protein S5 domain 2-like"/>
    <property type="match status" value="1"/>
</dbReference>
<dbReference type="PROSITE" id="PS00058">
    <property type="entry name" value="DNA_MISMATCH_REPAIR_1"/>
    <property type="match status" value="1"/>
</dbReference>